<gene>
    <name evidence="1" type="primary">rpsD</name>
    <name type="ordered locus">BT_1158</name>
</gene>
<organism>
    <name type="scientific">Bartonella tribocorum (strain CIP 105476 / IBS 506)</name>
    <dbReference type="NCBI Taxonomy" id="382640"/>
    <lineage>
        <taxon>Bacteria</taxon>
        <taxon>Pseudomonadati</taxon>
        <taxon>Pseudomonadota</taxon>
        <taxon>Alphaproteobacteria</taxon>
        <taxon>Hyphomicrobiales</taxon>
        <taxon>Bartonellaceae</taxon>
        <taxon>Bartonella</taxon>
    </lineage>
</organism>
<evidence type="ECO:0000255" key="1">
    <source>
        <dbReference type="HAMAP-Rule" id="MF_01306"/>
    </source>
</evidence>
<evidence type="ECO:0000256" key="2">
    <source>
        <dbReference type="SAM" id="MobiDB-lite"/>
    </source>
</evidence>
<evidence type="ECO:0000305" key="3"/>
<dbReference type="EMBL" id="AM260525">
    <property type="protein sequence ID" value="CAK01530.1"/>
    <property type="molecule type" value="Genomic_DNA"/>
</dbReference>
<dbReference type="RefSeq" id="WP_012231733.1">
    <property type="nucleotide sequence ID" value="NC_010161.1"/>
</dbReference>
<dbReference type="SMR" id="A9IU99"/>
<dbReference type="GeneID" id="71061366"/>
<dbReference type="KEGG" id="btr:BT_1158"/>
<dbReference type="eggNOG" id="COG0522">
    <property type="taxonomic scope" value="Bacteria"/>
</dbReference>
<dbReference type="HOGENOM" id="CLU_092403_0_0_5"/>
<dbReference type="Proteomes" id="UP000001592">
    <property type="component" value="Chromosome"/>
</dbReference>
<dbReference type="GO" id="GO:0015935">
    <property type="term" value="C:small ribosomal subunit"/>
    <property type="evidence" value="ECO:0007669"/>
    <property type="project" value="InterPro"/>
</dbReference>
<dbReference type="GO" id="GO:0019843">
    <property type="term" value="F:rRNA binding"/>
    <property type="evidence" value="ECO:0007669"/>
    <property type="project" value="UniProtKB-UniRule"/>
</dbReference>
<dbReference type="GO" id="GO:0003735">
    <property type="term" value="F:structural constituent of ribosome"/>
    <property type="evidence" value="ECO:0007669"/>
    <property type="project" value="InterPro"/>
</dbReference>
<dbReference type="GO" id="GO:0042274">
    <property type="term" value="P:ribosomal small subunit biogenesis"/>
    <property type="evidence" value="ECO:0007669"/>
    <property type="project" value="TreeGrafter"/>
</dbReference>
<dbReference type="GO" id="GO:0006412">
    <property type="term" value="P:translation"/>
    <property type="evidence" value="ECO:0007669"/>
    <property type="project" value="UniProtKB-UniRule"/>
</dbReference>
<dbReference type="CDD" id="cd00165">
    <property type="entry name" value="S4"/>
    <property type="match status" value="1"/>
</dbReference>
<dbReference type="FunFam" id="3.10.290.10:FF:000001">
    <property type="entry name" value="30S ribosomal protein S4"/>
    <property type="match status" value="1"/>
</dbReference>
<dbReference type="Gene3D" id="1.10.1050.10">
    <property type="entry name" value="Ribosomal Protein S4 Delta 41, Chain A, domain 1"/>
    <property type="match status" value="1"/>
</dbReference>
<dbReference type="Gene3D" id="3.10.290.10">
    <property type="entry name" value="RNA-binding S4 domain"/>
    <property type="match status" value="1"/>
</dbReference>
<dbReference type="HAMAP" id="MF_01306_B">
    <property type="entry name" value="Ribosomal_uS4_B"/>
    <property type="match status" value="1"/>
</dbReference>
<dbReference type="InterPro" id="IPR022801">
    <property type="entry name" value="Ribosomal_uS4"/>
</dbReference>
<dbReference type="InterPro" id="IPR005709">
    <property type="entry name" value="Ribosomal_uS4_bac-type"/>
</dbReference>
<dbReference type="InterPro" id="IPR018079">
    <property type="entry name" value="Ribosomal_uS4_CS"/>
</dbReference>
<dbReference type="InterPro" id="IPR001912">
    <property type="entry name" value="Ribosomal_uS4_N"/>
</dbReference>
<dbReference type="InterPro" id="IPR002942">
    <property type="entry name" value="S4_RNA-bd"/>
</dbReference>
<dbReference type="InterPro" id="IPR036986">
    <property type="entry name" value="S4_RNA-bd_sf"/>
</dbReference>
<dbReference type="NCBIfam" id="NF003717">
    <property type="entry name" value="PRK05327.1"/>
    <property type="match status" value="1"/>
</dbReference>
<dbReference type="NCBIfam" id="TIGR01017">
    <property type="entry name" value="rpsD_bact"/>
    <property type="match status" value="1"/>
</dbReference>
<dbReference type="PANTHER" id="PTHR11831">
    <property type="entry name" value="30S 40S RIBOSOMAL PROTEIN"/>
    <property type="match status" value="1"/>
</dbReference>
<dbReference type="PANTHER" id="PTHR11831:SF4">
    <property type="entry name" value="SMALL RIBOSOMAL SUBUNIT PROTEIN US4M"/>
    <property type="match status" value="1"/>
</dbReference>
<dbReference type="Pfam" id="PF00163">
    <property type="entry name" value="Ribosomal_S4"/>
    <property type="match status" value="1"/>
</dbReference>
<dbReference type="Pfam" id="PF01479">
    <property type="entry name" value="S4"/>
    <property type="match status" value="1"/>
</dbReference>
<dbReference type="SMART" id="SM01390">
    <property type="entry name" value="Ribosomal_S4"/>
    <property type="match status" value="1"/>
</dbReference>
<dbReference type="SMART" id="SM00363">
    <property type="entry name" value="S4"/>
    <property type="match status" value="1"/>
</dbReference>
<dbReference type="SUPFAM" id="SSF55174">
    <property type="entry name" value="Alpha-L RNA-binding motif"/>
    <property type="match status" value="1"/>
</dbReference>
<dbReference type="PROSITE" id="PS00632">
    <property type="entry name" value="RIBOSOMAL_S4"/>
    <property type="match status" value="1"/>
</dbReference>
<dbReference type="PROSITE" id="PS50889">
    <property type="entry name" value="S4"/>
    <property type="match status" value="1"/>
</dbReference>
<feature type="chain" id="PRO_1000085960" description="Small ribosomal subunit protein uS4">
    <location>
        <begin position="1"/>
        <end position="205"/>
    </location>
</feature>
<feature type="domain" description="S4 RNA-binding" evidence="1">
    <location>
        <begin position="94"/>
        <end position="157"/>
    </location>
</feature>
<feature type="region of interest" description="Disordered" evidence="2">
    <location>
        <begin position="1"/>
        <end position="46"/>
    </location>
</feature>
<feature type="compositionally biased region" description="Basic and acidic residues" evidence="2">
    <location>
        <begin position="1"/>
        <end position="16"/>
    </location>
</feature>
<keyword id="KW-0687">Ribonucleoprotein</keyword>
<keyword id="KW-0689">Ribosomal protein</keyword>
<keyword id="KW-0694">RNA-binding</keyword>
<keyword id="KW-0699">rRNA-binding</keyword>
<comment type="function">
    <text evidence="1">One of the primary rRNA binding proteins, it binds directly to 16S rRNA where it nucleates assembly of the body of the 30S subunit.</text>
</comment>
<comment type="function">
    <text evidence="1">With S5 and S12 plays an important role in translational accuracy.</text>
</comment>
<comment type="subunit">
    <text evidence="1">Part of the 30S ribosomal subunit. Contacts protein S5. The interaction surface between S4 and S5 is involved in control of translational fidelity.</text>
</comment>
<comment type="similarity">
    <text evidence="1">Belongs to the universal ribosomal protein uS4 family.</text>
</comment>
<name>RS4_BART1</name>
<reference key="1">
    <citation type="journal article" date="2007" name="Nat. Genet.">
        <title>Genomic analysis of Bartonella identifies type IV secretion systems as host adaptability factors.</title>
        <authorList>
            <person name="Saenz H.L."/>
            <person name="Engel P."/>
            <person name="Stoeckli M.C."/>
            <person name="Lanz C."/>
            <person name="Raddatz G."/>
            <person name="Vayssier-Taussat M."/>
            <person name="Birtles R."/>
            <person name="Schuster S.C."/>
            <person name="Dehio C."/>
        </authorList>
    </citation>
    <scope>NUCLEOTIDE SEQUENCE [LARGE SCALE GENOMIC DNA]</scope>
    <source>
        <strain>CIP 105476 / IBS 506</strain>
    </source>
</reference>
<protein>
    <recommendedName>
        <fullName evidence="1">Small ribosomal subunit protein uS4</fullName>
    </recommendedName>
    <alternativeName>
        <fullName evidence="3">30S ribosomal protein S4</fullName>
    </alternativeName>
</protein>
<proteinExistence type="inferred from homology"/>
<sequence>MSKRETTKYKIDRRMGENIWGRPKSPVNRRDYGPGQHGQRRKGKLSDYGVQLRAKQKLKGFYGDISEKQFHKTYVEAARRRGDTGENLIGLLESRLDAVVYRAKFVPTIFASRQFINHGHVNVNGRRTNIQSYRCKPGDVIEVREKSKQLVLVLESVQLAERDVPDYIEADHKQMKATFTRIPAFADVPYAVQMEPNLVVEFYSR</sequence>
<accession>A9IU99</accession>